<geneLocation type="chloroplast"/>
<proteinExistence type="inferred from homology"/>
<protein>
    <recommendedName>
        <fullName evidence="2">Small ribosomal subunit protein uS8c</fullName>
    </recommendedName>
    <alternativeName>
        <fullName>30S ribosomal protein S8, chloroplastic</fullName>
    </alternativeName>
</protein>
<organism>
    <name type="scientific">Lepidium virginicum</name>
    <name type="common">Virginia pepperweed</name>
    <dbReference type="NCBI Taxonomy" id="59292"/>
    <lineage>
        <taxon>Eukaryota</taxon>
        <taxon>Viridiplantae</taxon>
        <taxon>Streptophyta</taxon>
        <taxon>Embryophyta</taxon>
        <taxon>Tracheophyta</taxon>
        <taxon>Spermatophyta</taxon>
        <taxon>Magnoliopsida</taxon>
        <taxon>eudicotyledons</taxon>
        <taxon>Gunneridae</taxon>
        <taxon>Pentapetalae</taxon>
        <taxon>rosids</taxon>
        <taxon>malvids</taxon>
        <taxon>Brassicales</taxon>
        <taxon>Brassicaceae</taxon>
        <taxon>Lepidieae</taxon>
        <taxon>Lepidium</taxon>
    </lineage>
</organism>
<comment type="function">
    <text evidence="1">One of the primary rRNA binding proteins, it binds directly to 16S rRNA central domain where it helps coordinate assembly of the platform of the 30S subunit.</text>
</comment>
<comment type="subunit">
    <text evidence="1">Part of the 30S ribosomal subunit.</text>
</comment>
<comment type="subcellular location">
    <subcellularLocation>
        <location>Plastid</location>
        <location>Chloroplast</location>
    </subcellularLocation>
</comment>
<comment type="similarity">
    <text evidence="2">Belongs to the universal ribosomal protein uS8 family.</text>
</comment>
<gene>
    <name type="primary">rps8</name>
</gene>
<feature type="chain" id="PRO_0000290983" description="Small ribosomal subunit protein uS8c">
    <location>
        <begin position="1"/>
        <end position="134"/>
    </location>
</feature>
<dbReference type="EMBL" id="AP009374">
    <property type="protein sequence ID" value="BAF50496.1"/>
    <property type="molecule type" value="Genomic_DNA"/>
</dbReference>
<dbReference type="RefSeq" id="YP_001123672.1">
    <property type="nucleotide sequence ID" value="NC_009273.1"/>
</dbReference>
<dbReference type="SMR" id="A4QLE1"/>
<dbReference type="GeneID" id="4961969"/>
<dbReference type="GO" id="GO:0009507">
    <property type="term" value="C:chloroplast"/>
    <property type="evidence" value="ECO:0007669"/>
    <property type="project" value="UniProtKB-SubCell"/>
</dbReference>
<dbReference type="GO" id="GO:1990904">
    <property type="term" value="C:ribonucleoprotein complex"/>
    <property type="evidence" value="ECO:0007669"/>
    <property type="project" value="UniProtKB-KW"/>
</dbReference>
<dbReference type="GO" id="GO:0005840">
    <property type="term" value="C:ribosome"/>
    <property type="evidence" value="ECO:0007669"/>
    <property type="project" value="UniProtKB-KW"/>
</dbReference>
<dbReference type="GO" id="GO:0019843">
    <property type="term" value="F:rRNA binding"/>
    <property type="evidence" value="ECO:0007669"/>
    <property type="project" value="UniProtKB-UniRule"/>
</dbReference>
<dbReference type="GO" id="GO:0003735">
    <property type="term" value="F:structural constituent of ribosome"/>
    <property type="evidence" value="ECO:0007669"/>
    <property type="project" value="InterPro"/>
</dbReference>
<dbReference type="GO" id="GO:0006412">
    <property type="term" value="P:translation"/>
    <property type="evidence" value="ECO:0007669"/>
    <property type="project" value="UniProtKB-UniRule"/>
</dbReference>
<dbReference type="FunFam" id="3.30.1490.10:FF:000001">
    <property type="entry name" value="30S ribosomal protein S8"/>
    <property type="match status" value="1"/>
</dbReference>
<dbReference type="FunFam" id="3.30.1370.30:FF:000004">
    <property type="entry name" value="30S ribosomal protein S8, chloroplastic"/>
    <property type="match status" value="1"/>
</dbReference>
<dbReference type="Gene3D" id="3.30.1370.30">
    <property type="match status" value="1"/>
</dbReference>
<dbReference type="Gene3D" id="3.30.1490.10">
    <property type="match status" value="1"/>
</dbReference>
<dbReference type="HAMAP" id="MF_01302_B">
    <property type="entry name" value="Ribosomal_uS8_B"/>
    <property type="match status" value="1"/>
</dbReference>
<dbReference type="InterPro" id="IPR000630">
    <property type="entry name" value="Ribosomal_uS8"/>
</dbReference>
<dbReference type="InterPro" id="IPR047863">
    <property type="entry name" value="Ribosomal_uS8_CS"/>
</dbReference>
<dbReference type="InterPro" id="IPR035987">
    <property type="entry name" value="Ribosomal_uS8_sf"/>
</dbReference>
<dbReference type="NCBIfam" id="NF001109">
    <property type="entry name" value="PRK00136.1"/>
    <property type="match status" value="1"/>
</dbReference>
<dbReference type="PANTHER" id="PTHR11758">
    <property type="entry name" value="40S RIBOSOMAL PROTEIN S15A"/>
    <property type="match status" value="1"/>
</dbReference>
<dbReference type="Pfam" id="PF00410">
    <property type="entry name" value="Ribosomal_S8"/>
    <property type="match status" value="1"/>
</dbReference>
<dbReference type="SUPFAM" id="SSF56047">
    <property type="entry name" value="Ribosomal protein S8"/>
    <property type="match status" value="1"/>
</dbReference>
<dbReference type="PROSITE" id="PS00053">
    <property type="entry name" value="RIBOSOMAL_S8"/>
    <property type="match status" value="1"/>
</dbReference>
<accession>A4QLE1</accession>
<evidence type="ECO:0000250" key="1"/>
<evidence type="ECO:0000305" key="2"/>
<sequence>MGKDTIADIITSIRNADMNRKGTVRIRSTNITESIVKILLREGFIENVRKHRENNQYFLILTLRHKRNKKESYKTILNLKRISRPGLRIYSNSQRIPRILGGIGIVILSTSQGIMTDREARRKSIGGEILCYIW</sequence>
<keyword id="KW-0150">Chloroplast</keyword>
<keyword id="KW-0934">Plastid</keyword>
<keyword id="KW-0687">Ribonucleoprotein</keyword>
<keyword id="KW-0689">Ribosomal protein</keyword>
<keyword id="KW-0694">RNA-binding</keyword>
<keyword id="KW-0699">rRNA-binding</keyword>
<name>RR8_LEPVR</name>
<reference key="1">
    <citation type="submission" date="2007-03" db="EMBL/GenBank/DDBJ databases">
        <title>Sequencing analysis of Lepidium virginicum JO26 chloroplast DNA.</title>
        <authorList>
            <person name="Hosouchi T."/>
            <person name="Tsuruoka H."/>
            <person name="Kotani H."/>
        </authorList>
    </citation>
    <scope>NUCLEOTIDE SEQUENCE [LARGE SCALE GENOMIC DNA]</scope>
</reference>